<feature type="chain" id="PRO_0000366660" description="Ribosomal RNA large subunit methyltransferase H">
    <location>
        <begin position="1"/>
        <end position="159"/>
    </location>
</feature>
<feature type="binding site" evidence="1">
    <location>
        <position position="76"/>
    </location>
    <ligand>
        <name>S-adenosyl-L-methionine</name>
        <dbReference type="ChEBI" id="CHEBI:59789"/>
    </ligand>
</feature>
<feature type="binding site" evidence="1">
    <location>
        <position position="108"/>
    </location>
    <ligand>
        <name>S-adenosyl-L-methionine</name>
        <dbReference type="ChEBI" id="CHEBI:59789"/>
    </ligand>
</feature>
<feature type="binding site" evidence="1">
    <location>
        <begin position="127"/>
        <end position="132"/>
    </location>
    <ligand>
        <name>S-adenosyl-L-methionine</name>
        <dbReference type="ChEBI" id="CHEBI:59789"/>
    </ligand>
</feature>
<comment type="function">
    <text evidence="1">Specifically methylates the pseudouridine at position 1915 (m3Psi1915) in 23S rRNA.</text>
</comment>
<comment type="catalytic activity">
    <reaction evidence="1">
        <text>pseudouridine(1915) in 23S rRNA + S-adenosyl-L-methionine = N(3)-methylpseudouridine(1915) in 23S rRNA + S-adenosyl-L-homocysteine + H(+)</text>
        <dbReference type="Rhea" id="RHEA:42752"/>
        <dbReference type="Rhea" id="RHEA-COMP:10221"/>
        <dbReference type="Rhea" id="RHEA-COMP:10222"/>
        <dbReference type="ChEBI" id="CHEBI:15378"/>
        <dbReference type="ChEBI" id="CHEBI:57856"/>
        <dbReference type="ChEBI" id="CHEBI:59789"/>
        <dbReference type="ChEBI" id="CHEBI:65314"/>
        <dbReference type="ChEBI" id="CHEBI:74486"/>
        <dbReference type="EC" id="2.1.1.177"/>
    </reaction>
</comment>
<comment type="subunit">
    <text evidence="1">Homodimer.</text>
</comment>
<comment type="subcellular location">
    <subcellularLocation>
        <location evidence="1">Cytoplasm</location>
    </subcellularLocation>
</comment>
<comment type="similarity">
    <text evidence="1">Belongs to the RNA methyltransferase RlmH family.</text>
</comment>
<dbReference type="EC" id="2.1.1.177" evidence="1"/>
<dbReference type="EMBL" id="CP001129">
    <property type="protein sequence ID" value="ACG63278.1"/>
    <property type="molecule type" value="Genomic_DNA"/>
</dbReference>
<dbReference type="RefSeq" id="WP_012516519.1">
    <property type="nucleotide sequence ID" value="NC_011134.1"/>
</dbReference>
<dbReference type="SMR" id="B4U126"/>
<dbReference type="KEGG" id="sez:Sez_1959"/>
<dbReference type="HOGENOM" id="CLU_100552_0_0_9"/>
<dbReference type="Proteomes" id="UP000001873">
    <property type="component" value="Chromosome"/>
</dbReference>
<dbReference type="GO" id="GO:0005737">
    <property type="term" value="C:cytoplasm"/>
    <property type="evidence" value="ECO:0007669"/>
    <property type="project" value="UniProtKB-SubCell"/>
</dbReference>
<dbReference type="GO" id="GO:0070038">
    <property type="term" value="F:rRNA (pseudouridine-N3-)-methyltransferase activity"/>
    <property type="evidence" value="ECO:0007669"/>
    <property type="project" value="UniProtKB-UniRule"/>
</dbReference>
<dbReference type="CDD" id="cd18081">
    <property type="entry name" value="RlmH-like"/>
    <property type="match status" value="1"/>
</dbReference>
<dbReference type="Gene3D" id="3.40.1280.10">
    <property type="match status" value="1"/>
</dbReference>
<dbReference type="HAMAP" id="MF_00658">
    <property type="entry name" value="23SrRNA_methyltr_H"/>
    <property type="match status" value="1"/>
</dbReference>
<dbReference type="InterPro" id="IPR029028">
    <property type="entry name" value="Alpha/beta_knot_MTases"/>
</dbReference>
<dbReference type="InterPro" id="IPR003742">
    <property type="entry name" value="RlmH-like"/>
</dbReference>
<dbReference type="InterPro" id="IPR029026">
    <property type="entry name" value="tRNA_m1G_MTases_N"/>
</dbReference>
<dbReference type="NCBIfam" id="NF000985">
    <property type="entry name" value="PRK00103.1-3"/>
    <property type="match status" value="1"/>
</dbReference>
<dbReference type="NCBIfam" id="TIGR00246">
    <property type="entry name" value="tRNA_RlmH_YbeA"/>
    <property type="match status" value="1"/>
</dbReference>
<dbReference type="PANTHER" id="PTHR33603">
    <property type="entry name" value="METHYLTRANSFERASE"/>
    <property type="match status" value="1"/>
</dbReference>
<dbReference type="PANTHER" id="PTHR33603:SF1">
    <property type="entry name" value="RIBOSOMAL RNA LARGE SUBUNIT METHYLTRANSFERASE H"/>
    <property type="match status" value="1"/>
</dbReference>
<dbReference type="Pfam" id="PF02590">
    <property type="entry name" value="SPOUT_MTase"/>
    <property type="match status" value="1"/>
</dbReference>
<dbReference type="PIRSF" id="PIRSF004505">
    <property type="entry name" value="MT_bac"/>
    <property type="match status" value="1"/>
</dbReference>
<dbReference type="SUPFAM" id="SSF75217">
    <property type="entry name" value="alpha/beta knot"/>
    <property type="match status" value="1"/>
</dbReference>
<accession>B4U126</accession>
<proteinExistence type="inferred from homology"/>
<sequence>MKIKLICVGKLKEAYLRDGIAEYQKRLSRFCQCDIIELADEKTPDKASDAEKQQIMAKEADRIKKKLGQRDFVIALAIEGKQLASEQFSHLLSEVTVKGYSDIAFVIGGSLGLDQSIKNRANLLMSFGLLTLPHQLMRLVLIEQVYRAFMIQQGSPYHK</sequence>
<reference key="1">
    <citation type="journal article" date="2008" name="PLoS ONE">
        <title>Genome sequence of a lancefield group C Streptococcus zooepidemicus strain causing epidemic nephritis: new information about an old disease.</title>
        <authorList>
            <person name="Beres S.B."/>
            <person name="Sesso R."/>
            <person name="Pinto S.W.L."/>
            <person name="Hoe N.P."/>
            <person name="Porcella S.F."/>
            <person name="Deleo F.R."/>
            <person name="Musser J.M."/>
        </authorList>
    </citation>
    <scope>NUCLEOTIDE SEQUENCE [LARGE SCALE GENOMIC DNA]</scope>
    <source>
        <strain>MGCS10565</strain>
    </source>
</reference>
<name>RLMH_STREM</name>
<gene>
    <name evidence="1" type="primary">rlmH</name>
    <name type="ordered locus">Sez_1959</name>
</gene>
<protein>
    <recommendedName>
        <fullName evidence="1">Ribosomal RNA large subunit methyltransferase H</fullName>
        <ecNumber evidence="1">2.1.1.177</ecNumber>
    </recommendedName>
    <alternativeName>
        <fullName evidence="1">23S rRNA (pseudouridine1915-N3)-methyltransferase</fullName>
    </alternativeName>
    <alternativeName>
        <fullName evidence="1">23S rRNA m3Psi1915 methyltransferase</fullName>
    </alternativeName>
    <alternativeName>
        <fullName evidence="1">rRNA (pseudouridine-N3-)-methyltransferase RlmH</fullName>
    </alternativeName>
</protein>
<keyword id="KW-0963">Cytoplasm</keyword>
<keyword id="KW-0489">Methyltransferase</keyword>
<keyword id="KW-0698">rRNA processing</keyword>
<keyword id="KW-0949">S-adenosyl-L-methionine</keyword>
<keyword id="KW-0808">Transferase</keyword>
<evidence type="ECO:0000255" key="1">
    <source>
        <dbReference type="HAMAP-Rule" id="MF_00658"/>
    </source>
</evidence>
<organism>
    <name type="scientific">Streptococcus equi subsp. zooepidemicus (strain MGCS10565)</name>
    <dbReference type="NCBI Taxonomy" id="552526"/>
    <lineage>
        <taxon>Bacteria</taxon>
        <taxon>Bacillati</taxon>
        <taxon>Bacillota</taxon>
        <taxon>Bacilli</taxon>
        <taxon>Lactobacillales</taxon>
        <taxon>Streptococcaceae</taxon>
        <taxon>Streptococcus</taxon>
    </lineage>
</organism>